<gene>
    <name evidence="1" type="primary">atpH</name>
    <name type="ordered locus">SF3815</name>
    <name type="ordered locus">S3953</name>
</gene>
<accession>Q83PJ9</accession>
<accession>Q7BZA1</accession>
<comment type="function">
    <text evidence="1">F(1)F(0) ATP synthase produces ATP from ADP in the presence of a proton or sodium gradient. F-type ATPases consist of two structural domains, F(1) containing the extramembraneous catalytic core and F(0) containing the membrane proton channel, linked together by a central stalk and a peripheral stalk. During catalysis, ATP synthesis in the catalytic domain of F(1) is coupled via a rotary mechanism of the central stalk subunits to proton translocation.</text>
</comment>
<comment type="function">
    <text evidence="1">This protein is part of the stalk that links CF(0) to CF(1). It either transmits conformational changes from CF(0) to CF(1) or is implicated in proton conduction.</text>
</comment>
<comment type="subunit">
    <text evidence="1">F-type ATPases have 2 components, F(1) - the catalytic core - and F(0) - the membrane proton channel. F(1) has five subunits: alpha(3), beta(3), gamma(1), delta(1), epsilon(1). F(0) has three main subunits: a(1), b(2) and c(10-14). The alpha and beta chains form an alternating ring which encloses part of the gamma chain. F(1) is attached to F(0) by a central stalk formed by the gamma and epsilon chains, while a peripheral stalk is formed by the delta and b chains.</text>
</comment>
<comment type="subcellular location">
    <subcellularLocation>
        <location evidence="1">Cell inner membrane</location>
        <topology evidence="1">Peripheral membrane protein</topology>
    </subcellularLocation>
</comment>
<comment type="similarity">
    <text evidence="1">Belongs to the ATPase delta chain family.</text>
</comment>
<proteinExistence type="inferred from homology"/>
<protein>
    <recommendedName>
        <fullName evidence="1">ATP synthase subunit delta</fullName>
    </recommendedName>
    <alternativeName>
        <fullName evidence="1">ATP synthase F(1) sector subunit delta</fullName>
    </alternativeName>
    <alternativeName>
        <fullName evidence="1">F-type ATPase subunit delta</fullName>
        <shortName evidence="1">F-ATPase subunit delta</shortName>
    </alternativeName>
</protein>
<name>ATPD_SHIFL</name>
<reference key="1">
    <citation type="journal article" date="2002" name="Nucleic Acids Res.">
        <title>Genome sequence of Shigella flexneri 2a: insights into pathogenicity through comparison with genomes of Escherichia coli K12 and O157.</title>
        <authorList>
            <person name="Jin Q."/>
            <person name="Yuan Z."/>
            <person name="Xu J."/>
            <person name="Wang Y."/>
            <person name="Shen Y."/>
            <person name="Lu W."/>
            <person name="Wang J."/>
            <person name="Liu H."/>
            <person name="Yang J."/>
            <person name="Yang F."/>
            <person name="Zhang X."/>
            <person name="Zhang J."/>
            <person name="Yang G."/>
            <person name="Wu H."/>
            <person name="Qu D."/>
            <person name="Dong J."/>
            <person name="Sun L."/>
            <person name="Xue Y."/>
            <person name="Zhao A."/>
            <person name="Gao Y."/>
            <person name="Zhu J."/>
            <person name="Kan B."/>
            <person name="Ding K."/>
            <person name="Chen S."/>
            <person name="Cheng H."/>
            <person name="Yao Z."/>
            <person name="He B."/>
            <person name="Chen R."/>
            <person name="Ma D."/>
            <person name="Qiang B."/>
            <person name="Wen Y."/>
            <person name="Hou Y."/>
            <person name="Yu J."/>
        </authorList>
    </citation>
    <scope>NUCLEOTIDE SEQUENCE [LARGE SCALE GENOMIC DNA]</scope>
    <source>
        <strain>301 / Serotype 2a</strain>
    </source>
</reference>
<reference key="2">
    <citation type="journal article" date="2003" name="Infect. Immun.">
        <title>Complete genome sequence and comparative genomics of Shigella flexneri serotype 2a strain 2457T.</title>
        <authorList>
            <person name="Wei J."/>
            <person name="Goldberg M.B."/>
            <person name="Burland V."/>
            <person name="Venkatesan M.M."/>
            <person name="Deng W."/>
            <person name="Fournier G."/>
            <person name="Mayhew G.F."/>
            <person name="Plunkett G. III"/>
            <person name="Rose D.J."/>
            <person name="Darling A."/>
            <person name="Mau B."/>
            <person name="Perna N.T."/>
            <person name="Payne S.M."/>
            <person name="Runyen-Janecky L.J."/>
            <person name="Zhou S."/>
            <person name="Schwartz D.C."/>
            <person name="Blattner F.R."/>
        </authorList>
    </citation>
    <scope>NUCLEOTIDE SEQUENCE [LARGE SCALE GENOMIC DNA]</scope>
    <source>
        <strain>ATCC 700930 / 2457T / Serotype 2a</strain>
    </source>
</reference>
<keyword id="KW-0066">ATP synthesis</keyword>
<keyword id="KW-0997">Cell inner membrane</keyword>
<keyword id="KW-1003">Cell membrane</keyword>
<keyword id="KW-0139">CF(1)</keyword>
<keyword id="KW-0375">Hydrogen ion transport</keyword>
<keyword id="KW-0406">Ion transport</keyword>
<keyword id="KW-0472">Membrane</keyword>
<keyword id="KW-1185">Reference proteome</keyword>
<keyword id="KW-0813">Transport</keyword>
<evidence type="ECO:0000255" key="1">
    <source>
        <dbReference type="HAMAP-Rule" id="MF_01416"/>
    </source>
</evidence>
<feature type="chain" id="PRO_0000371141" description="ATP synthase subunit delta">
    <location>
        <begin position="1"/>
        <end position="177"/>
    </location>
</feature>
<dbReference type="EMBL" id="AE005674">
    <property type="protein sequence ID" value="AAN45255.1"/>
    <property type="molecule type" value="Genomic_DNA"/>
</dbReference>
<dbReference type="EMBL" id="AE014073">
    <property type="protein sequence ID" value="AAP18942.1"/>
    <property type="molecule type" value="Genomic_DNA"/>
</dbReference>
<dbReference type="RefSeq" id="NP_709548.1">
    <property type="nucleotide sequence ID" value="NC_004337.2"/>
</dbReference>
<dbReference type="RefSeq" id="WP_001288593.1">
    <property type="nucleotide sequence ID" value="NZ_WPGW01000050.1"/>
</dbReference>
<dbReference type="SMR" id="Q83PJ9"/>
<dbReference type="STRING" id="198214.SF3815"/>
<dbReference type="PaxDb" id="198214-SF3815"/>
<dbReference type="GeneID" id="1026901"/>
<dbReference type="KEGG" id="sfl:SF3815"/>
<dbReference type="KEGG" id="sfx:S3953"/>
<dbReference type="PATRIC" id="fig|198214.7.peg.4502"/>
<dbReference type="HOGENOM" id="CLU_085114_3_0_6"/>
<dbReference type="Proteomes" id="UP000001006">
    <property type="component" value="Chromosome"/>
</dbReference>
<dbReference type="Proteomes" id="UP000002673">
    <property type="component" value="Chromosome"/>
</dbReference>
<dbReference type="GO" id="GO:0005886">
    <property type="term" value="C:plasma membrane"/>
    <property type="evidence" value="ECO:0007669"/>
    <property type="project" value="UniProtKB-SubCell"/>
</dbReference>
<dbReference type="GO" id="GO:0045259">
    <property type="term" value="C:proton-transporting ATP synthase complex"/>
    <property type="evidence" value="ECO:0007669"/>
    <property type="project" value="UniProtKB-KW"/>
</dbReference>
<dbReference type="GO" id="GO:0046933">
    <property type="term" value="F:proton-transporting ATP synthase activity, rotational mechanism"/>
    <property type="evidence" value="ECO:0007669"/>
    <property type="project" value="UniProtKB-UniRule"/>
</dbReference>
<dbReference type="FunFam" id="1.10.520.20:FF:000001">
    <property type="entry name" value="ATP synthase subunit delta"/>
    <property type="match status" value="1"/>
</dbReference>
<dbReference type="Gene3D" id="1.10.520.20">
    <property type="entry name" value="N-terminal domain of the delta subunit of the F1F0-ATP synthase"/>
    <property type="match status" value="1"/>
</dbReference>
<dbReference type="HAMAP" id="MF_01416">
    <property type="entry name" value="ATP_synth_delta_bact"/>
    <property type="match status" value="1"/>
</dbReference>
<dbReference type="InterPro" id="IPR026015">
    <property type="entry name" value="ATP_synth_OSCP/delta_N_sf"/>
</dbReference>
<dbReference type="InterPro" id="IPR020781">
    <property type="entry name" value="ATPase_OSCP/d_CS"/>
</dbReference>
<dbReference type="InterPro" id="IPR000711">
    <property type="entry name" value="ATPase_OSCP/dsu"/>
</dbReference>
<dbReference type="NCBIfam" id="TIGR01145">
    <property type="entry name" value="ATP_synt_delta"/>
    <property type="match status" value="1"/>
</dbReference>
<dbReference type="NCBIfam" id="NF004402">
    <property type="entry name" value="PRK05758.2-2"/>
    <property type="match status" value="1"/>
</dbReference>
<dbReference type="NCBIfam" id="NF004404">
    <property type="entry name" value="PRK05758.2-5"/>
    <property type="match status" value="1"/>
</dbReference>
<dbReference type="PANTHER" id="PTHR11910">
    <property type="entry name" value="ATP SYNTHASE DELTA CHAIN"/>
    <property type="match status" value="1"/>
</dbReference>
<dbReference type="Pfam" id="PF00213">
    <property type="entry name" value="OSCP"/>
    <property type="match status" value="1"/>
</dbReference>
<dbReference type="PRINTS" id="PR00125">
    <property type="entry name" value="ATPASEDELTA"/>
</dbReference>
<dbReference type="SUPFAM" id="SSF47928">
    <property type="entry name" value="N-terminal domain of the delta subunit of the F1F0-ATP synthase"/>
    <property type="match status" value="1"/>
</dbReference>
<dbReference type="PROSITE" id="PS00389">
    <property type="entry name" value="ATPASE_DELTA"/>
    <property type="match status" value="1"/>
</dbReference>
<organism>
    <name type="scientific">Shigella flexneri</name>
    <dbReference type="NCBI Taxonomy" id="623"/>
    <lineage>
        <taxon>Bacteria</taxon>
        <taxon>Pseudomonadati</taxon>
        <taxon>Pseudomonadota</taxon>
        <taxon>Gammaproteobacteria</taxon>
        <taxon>Enterobacterales</taxon>
        <taxon>Enterobacteriaceae</taxon>
        <taxon>Shigella</taxon>
    </lineage>
</organism>
<sequence length="177" mass="19378">MSEFITVARPYAKAAFDFAVEHQSVERWQDMLTFAAEVTKNEQMAELLSGALAPETLAESFIAVCGEQLDENGQNLIRVMAENGRLNALPDVLEQFIHLRAVSEATAEVDVISAAALSEQQLAKISAAMEKRLSRKVKLNCKIDKSVMAGVIIRSGDMVIDGSVRGRLERLADVLQS</sequence>